<organism>
    <name type="scientific">Rhizobium etli (strain ATCC 51251 / DSM 11541 / JCM 21823 / NBRC 15573 / CFN 42)</name>
    <dbReference type="NCBI Taxonomy" id="347834"/>
    <lineage>
        <taxon>Bacteria</taxon>
        <taxon>Pseudomonadati</taxon>
        <taxon>Pseudomonadota</taxon>
        <taxon>Alphaproteobacteria</taxon>
        <taxon>Hyphomicrobiales</taxon>
        <taxon>Rhizobiaceae</taxon>
        <taxon>Rhizobium/Agrobacterium group</taxon>
        <taxon>Rhizobium</taxon>
    </lineage>
</organism>
<keyword id="KW-0066">ATP synthesis</keyword>
<keyword id="KW-0997">Cell inner membrane</keyword>
<keyword id="KW-1003">Cell membrane</keyword>
<keyword id="KW-0139">CF(1)</keyword>
<keyword id="KW-0375">Hydrogen ion transport</keyword>
<keyword id="KW-0406">Ion transport</keyword>
<keyword id="KW-0472">Membrane</keyword>
<keyword id="KW-1185">Reference proteome</keyword>
<keyword id="KW-0813">Transport</keyword>
<feature type="chain" id="PRO_0000265870" description="ATP synthase epsilon chain">
    <location>
        <begin position="1"/>
        <end position="135"/>
    </location>
</feature>
<comment type="function">
    <text evidence="1">Produces ATP from ADP in the presence of a proton gradient across the membrane.</text>
</comment>
<comment type="subunit">
    <text>F-type ATPases have 2 components, CF(1) - the catalytic core - and CF(0) - the membrane proton channel. CF(1) has five subunits: alpha(3), beta(3), gamma(1), delta(1), epsilon(1). CF(0) has three main subunits: a, b and c.</text>
</comment>
<comment type="subcellular location">
    <subcellularLocation>
        <location evidence="1">Cell inner membrane</location>
        <topology evidence="1">Peripheral membrane protein</topology>
    </subcellularLocation>
</comment>
<comment type="similarity">
    <text evidence="1">Belongs to the ATPase epsilon chain family.</text>
</comment>
<accession>Q2K3H1</accession>
<protein>
    <recommendedName>
        <fullName evidence="1">ATP synthase epsilon chain</fullName>
    </recommendedName>
    <alternativeName>
        <fullName evidence="1">ATP synthase F1 sector epsilon subunit</fullName>
    </alternativeName>
    <alternativeName>
        <fullName evidence="1">F-ATPase epsilon subunit</fullName>
    </alternativeName>
</protein>
<dbReference type="EMBL" id="CP000133">
    <property type="protein sequence ID" value="ABC92615.1"/>
    <property type="molecule type" value="Genomic_DNA"/>
</dbReference>
<dbReference type="RefSeq" id="WP_011427064.1">
    <property type="nucleotide sequence ID" value="NC_007761.1"/>
</dbReference>
<dbReference type="SMR" id="Q2K3H1"/>
<dbReference type="KEGG" id="ret:RHE_CH03869"/>
<dbReference type="eggNOG" id="COG0355">
    <property type="taxonomic scope" value="Bacteria"/>
</dbReference>
<dbReference type="HOGENOM" id="CLU_084338_2_1_5"/>
<dbReference type="OrthoDB" id="9799969at2"/>
<dbReference type="Proteomes" id="UP000001936">
    <property type="component" value="Chromosome"/>
</dbReference>
<dbReference type="GO" id="GO:0005886">
    <property type="term" value="C:plasma membrane"/>
    <property type="evidence" value="ECO:0007669"/>
    <property type="project" value="UniProtKB-SubCell"/>
</dbReference>
<dbReference type="GO" id="GO:0045259">
    <property type="term" value="C:proton-transporting ATP synthase complex"/>
    <property type="evidence" value="ECO:0007669"/>
    <property type="project" value="UniProtKB-KW"/>
</dbReference>
<dbReference type="GO" id="GO:0005524">
    <property type="term" value="F:ATP binding"/>
    <property type="evidence" value="ECO:0007669"/>
    <property type="project" value="UniProtKB-UniRule"/>
</dbReference>
<dbReference type="GO" id="GO:0046933">
    <property type="term" value="F:proton-transporting ATP synthase activity, rotational mechanism"/>
    <property type="evidence" value="ECO:0007669"/>
    <property type="project" value="UniProtKB-UniRule"/>
</dbReference>
<dbReference type="CDD" id="cd12152">
    <property type="entry name" value="F1-ATPase_delta"/>
    <property type="match status" value="1"/>
</dbReference>
<dbReference type="Gene3D" id="2.60.15.10">
    <property type="entry name" value="F0F1 ATP synthase delta/epsilon subunit, N-terminal"/>
    <property type="match status" value="1"/>
</dbReference>
<dbReference type="HAMAP" id="MF_00530">
    <property type="entry name" value="ATP_synth_epsil_bac"/>
    <property type="match status" value="1"/>
</dbReference>
<dbReference type="InterPro" id="IPR001469">
    <property type="entry name" value="ATP_synth_F1_dsu/esu"/>
</dbReference>
<dbReference type="InterPro" id="IPR020546">
    <property type="entry name" value="ATP_synth_F1_dsu/esu_N"/>
</dbReference>
<dbReference type="InterPro" id="IPR036771">
    <property type="entry name" value="ATPsynth_dsu/esu_N"/>
</dbReference>
<dbReference type="NCBIfam" id="TIGR01216">
    <property type="entry name" value="ATP_synt_epsi"/>
    <property type="match status" value="1"/>
</dbReference>
<dbReference type="NCBIfam" id="NF001851">
    <property type="entry name" value="PRK00571.2-4"/>
    <property type="match status" value="1"/>
</dbReference>
<dbReference type="PANTHER" id="PTHR13822">
    <property type="entry name" value="ATP SYNTHASE DELTA/EPSILON CHAIN"/>
    <property type="match status" value="1"/>
</dbReference>
<dbReference type="PANTHER" id="PTHR13822:SF10">
    <property type="entry name" value="ATP SYNTHASE EPSILON CHAIN, CHLOROPLASTIC"/>
    <property type="match status" value="1"/>
</dbReference>
<dbReference type="Pfam" id="PF02823">
    <property type="entry name" value="ATP-synt_DE_N"/>
    <property type="match status" value="1"/>
</dbReference>
<dbReference type="SUPFAM" id="SSF51344">
    <property type="entry name" value="Epsilon subunit of F1F0-ATP synthase N-terminal domain"/>
    <property type="match status" value="1"/>
</dbReference>
<reference key="1">
    <citation type="journal article" date="2006" name="Proc. Natl. Acad. Sci. U.S.A.">
        <title>The partitioned Rhizobium etli genome: genetic and metabolic redundancy in seven interacting replicons.</title>
        <authorList>
            <person name="Gonzalez V."/>
            <person name="Santamaria R.I."/>
            <person name="Bustos P."/>
            <person name="Hernandez-Gonzalez I."/>
            <person name="Medrano-Soto A."/>
            <person name="Moreno-Hagelsieb G."/>
            <person name="Janga S.C."/>
            <person name="Ramirez M.A."/>
            <person name="Jimenez-Jacinto V."/>
            <person name="Collado-Vides J."/>
            <person name="Davila G."/>
        </authorList>
    </citation>
    <scope>NUCLEOTIDE SEQUENCE [LARGE SCALE GENOMIC DNA]</scope>
    <source>
        <strain>ATCC 51251 / DSM 11541 / JCM 21823 / NBRC 15573 / CFN 42</strain>
    </source>
</reference>
<sequence>MADNFNFELVSPERLLLSEMVTEVVVPATEGEMTVMANHAPTMTTIKPGVVSVRSASGKKQDYVVFGGFADILPTGCTLLAESAVPVEELHKDELTRRIEAARKELEHAELHEHKSRLEHFIMELTHLRGIVQQD</sequence>
<gene>
    <name evidence="1" type="primary">atpC</name>
    <name type="ordered locus">RHE_CH03869</name>
</gene>
<name>ATPE_RHIEC</name>
<proteinExistence type="inferred from homology"/>
<evidence type="ECO:0000255" key="1">
    <source>
        <dbReference type="HAMAP-Rule" id="MF_00530"/>
    </source>
</evidence>